<accession>B8FJL5</accession>
<gene>
    <name evidence="1" type="primary">mutS</name>
    <name type="ordered locus">Dalk_3998</name>
</gene>
<evidence type="ECO:0000255" key="1">
    <source>
        <dbReference type="HAMAP-Rule" id="MF_00096"/>
    </source>
</evidence>
<evidence type="ECO:0000256" key="2">
    <source>
        <dbReference type="SAM" id="MobiDB-lite"/>
    </source>
</evidence>
<sequence length="889" mass="98942">MSAPKVTPMVRQYLSIKAEHPDSILFFRMGDFYEMFFEDAEKASKALDITLTSRNKNDPDPVPMCGVPHHSANGYVARLVEQGFKVAICDQVQDPSEAKGLVERKVVQVVTPGMQLDGRYLDASQNNFVCAAVTGRGGVGLAFLDISTGAFLVTQVTTPESAFQEILRMGPKELVLPEKFEENARAAAAMRMADQLPTSRLEGKDFENARTRDRLLEHFKTRSLEGFGIQDLPLAVRAAGALLHYVQQAQRQEITHVTKIQAYFQDQFLWIDDNSARNLELLKNIRNGTRQGALISVLDKTVTAMGARLMSYLLRYPLIDPQVINLRLDAVEQAKDLARVRDEVREALKEVHDLERLRSRTALGHANGRDLAAMGESLKQLPRLWALLKENFESPLLCGEATDDGLTDVADLIDRSIREDAPPGVRDGGMIKPGFNEELDEVAALATDVKGLIAGLEAQEKERTGISTLKVRYNKVFGYYIEISKNQTKSIPPHYVRKQTLVNAERYITDELKEFETKVLGAEERRVALEYNIFTQIVDRINGENDRLEKASHLIAWVDVLAALGHVADHNGYCRPVVDMGQTLDLQESRHPVVEKMLPGQRFVPNNIAMNNLDQQILMITGPNMAGKSTVLRQAALCVIMAQMGSFVPAEKAVVGVVDKIFTRVGALDNLSQGESTFMVEMQETANILNNVSHRSLVILDEIGRGTSTFDGLSIAWAVAEYLHDYKDHGVKTMFATHYHELTDLTKTHPRVKNFNIAVNEWNDEIIFLHSLVEGGTNKSYGIQVARLAGIPASVIRRSKQVLQTIEDSEEARVAYSAKASGKSGKKDVQVQMSLFPTPGELAAQALERMDINVMTPLEAMNVLSELQQRVKRPEKAPADVTAETEDQE</sequence>
<name>MUTS_DESAL</name>
<protein>
    <recommendedName>
        <fullName evidence="1">DNA mismatch repair protein MutS</fullName>
    </recommendedName>
</protein>
<keyword id="KW-0067">ATP-binding</keyword>
<keyword id="KW-0227">DNA damage</keyword>
<keyword id="KW-0234">DNA repair</keyword>
<keyword id="KW-0238">DNA-binding</keyword>
<keyword id="KW-0547">Nucleotide-binding</keyword>
<keyword id="KW-1185">Reference proteome</keyword>
<dbReference type="EMBL" id="CP001322">
    <property type="protein sequence ID" value="ACL05684.1"/>
    <property type="molecule type" value="Genomic_DNA"/>
</dbReference>
<dbReference type="RefSeq" id="WP_015948732.1">
    <property type="nucleotide sequence ID" value="NC_011768.1"/>
</dbReference>
<dbReference type="SMR" id="B8FJL5"/>
<dbReference type="KEGG" id="dal:Dalk_3998"/>
<dbReference type="eggNOG" id="COG0249">
    <property type="taxonomic scope" value="Bacteria"/>
</dbReference>
<dbReference type="HOGENOM" id="CLU_002472_3_1_7"/>
<dbReference type="Proteomes" id="UP000000739">
    <property type="component" value="Chromosome"/>
</dbReference>
<dbReference type="GO" id="GO:0005829">
    <property type="term" value="C:cytosol"/>
    <property type="evidence" value="ECO:0007669"/>
    <property type="project" value="TreeGrafter"/>
</dbReference>
<dbReference type="GO" id="GO:0005524">
    <property type="term" value="F:ATP binding"/>
    <property type="evidence" value="ECO:0007669"/>
    <property type="project" value="UniProtKB-UniRule"/>
</dbReference>
<dbReference type="GO" id="GO:0140664">
    <property type="term" value="F:ATP-dependent DNA damage sensor activity"/>
    <property type="evidence" value="ECO:0007669"/>
    <property type="project" value="InterPro"/>
</dbReference>
<dbReference type="GO" id="GO:0003684">
    <property type="term" value="F:damaged DNA binding"/>
    <property type="evidence" value="ECO:0007669"/>
    <property type="project" value="UniProtKB-UniRule"/>
</dbReference>
<dbReference type="GO" id="GO:0030983">
    <property type="term" value="F:mismatched DNA binding"/>
    <property type="evidence" value="ECO:0007669"/>
    <property type="project" value="InterPro"/>
</dbReference>
<dbReference type="GO" id="GO:0006298">
    <property type="term" value="P:mismatch repair"/>
    <property type="evidence" value="ECO:0007669"/>
    <property type="project" value="UniProtKB-UniRule"/>
</dbReference>
<dbReference type="CDD" id="cd03284">
    <property type="entry name" value="ABC_MutS1"/>
    <property type="match status" value="1"/>
</dbReference>
<dbReference type="FunFam" id="3.40.1170.10:FF:000001">
    <property type="entry name" value="DNA mismatch repair protein MutS"/>
    <property type="match status" value="1"/>
</dbReference>
<dbReference type="FunFam" id="3.40.50.300:FF:000870">
    <property type="entry name" value="MutS protein homolog 4"/>
    <property type="match status" value="1"/>
</dbReference>
<dbReference type="Gene3D" id="1.10.1420.10">
    <property type="match status" value="2"/>
</dbReference>
<dbReference type="Gene3D" id="3.40.1170.10">
    <property type="entry name" value="DNA repair protein MutS, domain I"/>
    <property type="match status" value="1"/>
</dbReference>
<dbReference type="Gene3D" id="3.30.420.110">
    <property type="entry name" value="MutS, connector domain"/>
    <property type="match status" value="1"/>
</dbReference>
<dbReference type="Gene3D" id="3.40.50.300">
    <property type="entry name" value="P-loop containing nucleotide triphosphate hydrolases"/>
    <property type="match status" value="1"/>
</dbReference>
<dbReference type="HAMAP" id="MF_00096">
    <property type="entry name" value="MutS"/>
    <property type="match status" value="1"/>
</dbReference>
<dbReference type="InterPro" id="IPR005748">
    <property type="entry name" value="DNA_mismatch_repair_MutS"/>
</dbReference>
<dbReference type="InterPro" id="IPR007695">
    <property type="entry name" value="DNA_mismatch_repair_MutS-lik_N"/>
</dbReference>
<dbReference type="InterPro" id="IPR017261">
    <property type="entry name" value="DNA_mismatch_repair_MutS/MSH"/>
</dbReference>
<dbReference type="InterPro" id="IPR000432">
    <property type="entry name" value="DNA_mismatch_repair_MutS_C"/>
</dbReference>
<dbReference type="InterPro" id="IPR007861">
    <property type="entry name" value="DNA_mismatch_repair_MutS_clamp"/>
</dbReference>
<dbReference type="InterPro" id="IPR007696">
    <property type="entry name" value="DNA_mismatch_repair_MutS_core"/>
</dbReference>
<dbReference type="InterPro" id="IPR016151">
    <property type="entry name" value="DNA_mismatch_repair_MutS_N"/>
</dbReference>
<dbReference type="InterPro" id="IPR036187">
    <property type="entry name" value="DNA_mismatch_repair_MutS_sf"/>
</dbReference>
<dbReference type="InterPro" id="IPR007860">
    <property type="entry name" value="DNA_mmatch_repair_MutS_con_dom"/>
</dbReference>
<dbReference type="InterPro" id="IPR045076">
    <property type="entry name" value="MutS"/>
</dbReference>
<dbReference type="InterPro" id="IPR036678">
    <property type="entry name" value="MutS_con_dom_sf"/>
</dbReference>
<dbReference type="InterPro" id="IPR027417">
    <property type="entry name" value="P-loop_NTPase"/>
</dbReference>
<dbReference type="NCBIfam" id="TIGR01070">
    <property type="entry name" value="mutS1"/>
    <property type="match status" value="1"/>
</dbReference>
<dbReference type="NCBIfam" id="NF003810">
    <property type="entry name" value="PRK05399.1"/>
    <property type="match status" value="1"/>
</dbReference>
<dbReference type="PANTHER" id="PTHR11361:SF34">
    <property type="entry name" value="DNA MISMATCH REPAIR PROTEIN MSH1, MITOCHONDRIAL"/>
    <property type="match status" value="1"/>
</dbReference>
<dbReference type="PANTHER" id="PTHR11361">
    <property type="entry name" value="DNA MISMATCH REPAIR PROTEIN MUTS FAMILY MEMBER"/>
    <property type="match status" value="1"/>
</dbReference>
<dbReference type="Pfam" id="PF01624">
    <property type="entry name" value="MutS_I"/>
    <property type="match status" value="1"/>
</dbReference>
<dbReference type="Pfam" id="PF05188">
    <property type="entry name" value="MutS_II"/>
    <property type="match status" value="1"/>
</dbReference>
<dbReference type="Pfam" id="PF05192">
    <property type="entry name" value="MutS_III"/>
    <property type="match status" value="1"/>
</dbReference>
<dbReference type="Pfam" id="PF05190">
    <property type="entry name" value="MutS_IV"/>
    <property type="match status" value="1"/>
</dbReference>
<dbReference type="Pfam" id="PF00488">
    <property type="entry name" value="MutS_V"/>
    <property type="match status" value="1"/>
</dbReference>
<dbReference type="PIRSF" id="PIRSF037677">
    <property type="entry name" value="DNA_mis_repair_Msh6"/>
    <property type="match status" value="1"/>
</dbReference>
<dbReference type="SMART" id="SM00534">
    <property type="entry name" value="MUTSac"/>
    <property type="match status" value="1"/>
</dbReference>
<dbReference type="SMART" id="SM00533">
    <property type="entry name" value="MUTSd"/>
    <property type="match status" value="1"/>
</dbReference>
<dbReference type="SUPFAM" id="SSF55271">
    <property type="entry name" value="DNA repair protein MutS, domain I"/>
    <property type="match status" value="1"/>
</dbReference>
<dbReference type="SUPFAM" id="SSF53150">
    <property type="entry name" value="DNA repair protein MutS, domain II"/>
    <property type="match status" value="1"/>
</dbReference>
<dbReference type="SUPFAM" id="SSF48334">
    <property type="entry name" value="DNA repair protein MutS, domain III"/>
    <property type="match status" value="1"/>
</dbReference>
<dbReference type="SUPFAM" id="SSF52540">
    <property type="entry name" value="P-loop containing nucleoside triphosphate hydrolases"/>
    <property type="match status" value="1"/>
</dbReference>
<dbReference type="PROSITE" id="PS00486">
    <property type="entry name" value="DNA_MISMATCH_REPAIR_2"/>
    <property type="match status" value="1"/>
</dbReference>
<proteinExistence type="inferred from homology"/>
<organism>
    <name type="scientific">Desulfatibacillum aliphaticivorans</name>
    <dbReference type="NCBI Taxonomy" id="218208"/>
    <lineage>
        <taxon>Bacteria</taxon>
        <taxon>Pseudomonadati</taxon>
        <taxon>Thermodesulfobacteriota</taxon>
        <taxon>Desulfobacteria</taxon>
        <taxon>Desulfobacterales</taxon>
        <taxon>Desulfatibacillaceae</taxon>
        <taxon>Desulfatibacillum</taxon>
    </lineage>
</organism>
<reference key="1">
    <citation type="journal article" date="2012" name="Environ. Microbiol.">
        <title>The genome sequence of Desulfatibacillum alkenivorans AK-01: a blueprint for anaerobic alkane oxidation.</title>
        <authorList>
            <person name="Callaghan A.V."/>
            <person name="Morris B.E."/>
            <person name="Pereira I.A."/>
            <person name="McInerney M.J."/>
            <person name="Austin R.N."/>
            <person name="Groves J.T."/>
            <person name="Kukor J.J."/>
            <person name="Suflita J.M."/>
            <person name="Young L.Y."/>
            <person name="Zylstra G.J."/>
            <person name="Wawrik B."/>
        </authorList>
    </citation>
    <scope>NUCLEOTIDE SEQUENCE [LARGE SCALE GENOMIC DNA]</scope>
    <source>
        <strain>AK-01</strain>
    </source>
</reference>
<comment type="function">
    <text evidence="1">This protein is involved in the repair of mismatches in DNA. It is possible that it carries out the mismatch recognition step. This protein has a weak ATPase activity.</text>
</comment>
<comment type="similarity">
    <text evidence="1">Belongs to the DNA mismatch repair MutS family.</text>
</comment>
<feature type="chain" id="PRO_1000117282" description="DNA mismatch repair protein MutS">
    <location>
        <begin position="1"/>
        <end position="889"/>
    </location>
</feature>
<feature type="region of interest" description="Disordered" evidence="2">
    <location>
        <begin position="869"/>
        <end position="889"/>
    </location>
</feature>
<feature type="binding site" evidence="1">
    <location>
        <begin position="622"/>
        <end position="629"/>
    </location>
    <ligand>
        <name>ATP</name>
        <dbReference type="ChEBI" id="CHEBI:30616"/>
    </ligand>
</feature>